<comment type="function">
    <text evidence="1">The phosphoenolpyruvate-dependent sugar phosphotransferase system (sugar PTS), a major carbohydrate active transport system, catalyzes the phosphorylation of incoming sugar substrates concomitantly with their translocation across the cell membrane. The enzyme II LacEF PTS system is involved in lactose transport.</text>
</comment>
<comment type="catalytic activity">
    <reaction evidence="1">
        <text>lactose(out) + N(pros)-phospho-L-histidyl-[protein] = lactose 6-phosphate(in) + L-histidyl-[protein]</text>
        <dbReference type="Rhea" id="RHEA:42400"/>
        <dbReference type="Rhea" id="RHEA-COMP:9745"/>
        <dbReference type="Rhea" id="RHEA-COMP:9746"/>
        <dbReference type="ChEBI" id="CHEBI:17716"/>
        <dbReference type="ChEBI" id="CHEBI:29979"/>
        <dbReference type="ChEBI" id="CHEBI:64837"/>
        <dbReference type="ChEBI" id="CHEBI:79080"/>
        <dbReference type="EC" id="2.7.1.207"/>
    </reaction>
</comment>
<comment type="subcellular location">
    <subcellularLocation>
        <location evidence="1 3">Cell membrane</location>
        <topology evidence="1 3">Multi-pass membrane protein</topology>
    </subcellularLocation>
</comment>
<comment type="induction">
    <text evidence="1">Induced by lactose, galactose and galactose-6-P. Repressed by glucose.</text>
</comment>
<comment type="domain">
    <text evidence="3">The EIIC type-3 domain forms the PTS system translocation channel and contains the specific substrate-binding site.</text>
</comment>
<comment type="domain">
    <text evidence="2">The PTS EIIB type-3 domain is phosphorylated by phospho-EIIA on a cysteinyl residue. Then, it transfers the phosphoryl group to the sugar substrate concomitantly with the sugar uptake processed by the PTS EIIC type-3 domain.</text>
</comment>
<evidence type="ECO:0000250" key="1">
    <source>
        <dbReference type="UniProtKB" id="P11162"/>
    </source>
</evidence>
<evidence type="ECO:0000255" key="2">
    <source>
        <dbReference type="PROSITE-ProRule" id="PRU00423"/>
    </source>
</evidence>
<evidence type="ECO:0000255" key="3">
    <source>
        <dbReference type="PROSITE-ProRule" id="PRU00428"/>
    </source>
</evidence>
<evidence type="ECO:0000256" key="4">
    <source>
        <dbReference type="SAM" id="MobiDB-lite"/>
    </source>
</evidence>
<keyword id="KW-1003">Cell membrane</keyword>
<keyword id="KW-0418">Kinase</keyword>
<keyword id="KW-0472">Membrane</keyword>
<keyword id="KW-0597">Phosphoprotein</keyword>
<keyword id="KW-0598">Phosphotransferase system</keyword>
<keyword id="KW-0762">Sugar transport</keyword>
<keyword id="KW-0808">Transferase</keyword>
<keyword id="KW-0812">Transmembrane</keyword>
<keyword id="KW-1133">Transmembrane helix</keyword>
<keyword id="KW-0813">Transport</keyword>
<protein>
    <recommendedName>
        <fullName evidence="1">PTS system lactose-specific EIICB component</fullName>
    </recommendedName>
    <alternativeName>
        <fullName evidence="1">EIICB-Lac</fullName>
        <shortName evidence="1">EII-Lac</shortName>
    </alternativeName>
    <domain>
        <recommendedName>
            <fullName evidence="1">PTS system lactose-specific EIIC component</fullName>
        </recommendedName>
        <alternativeName>
            <fullName evidence="1">Lactose permease IIC component</fullName>
        </alternativeName>
    </domain>
    <domain>
        <recommendedName>
            <fullName evidence="1">PTS system lactose-specific EIIB component</fullName>
            <ecNumber evidence="1">2.7.1.207</ecNumber>
        </recommendedName>
        <alternativeName>
            <fullName evidence="1">Lactose-specific phosphotransferase enzyme IIB component</fullName>
        </alternativeName>
    </domain>
</protein>
<name>PTLCB_STAHJ</name>
<reference key="1">
    <citation type="journal article" date="2005" name="J. Bacteriol.">
        <title>Whole-genome sequencing of Staphylococcus haemolyticus uncovers the extreme plasticity of its genome and the evolution of human-colonizing staphylococcal species.</title>
        <authorList>
            <person name="Takeuchi F."/>
            <person name="Watanabe S."/>
            <person name="Baba T."/>
            <person name="Yuzawa H."/>
            <person name="Ito T."/>
            <person name="Morimoto Y."/>
            <person name="Kuroda M."/>
            <person name="Cui L."/>
            <person name="Takahashi M."/>
            <person name="Ankai A."/>
            <person name="Baba S."/>
            <person name="Fukui S."/>
            <person name="Lee J.C."/>
            <person name="Hiramatsu K."/>
        </authorList>
    </citation>
    <scope>NUCLEOTIDE SEQUENCE [LARGE SCALE GENOMIC DNA]</scope>
    <source>
        <strain>JCSC1435</strain>
    </source>
</reference>
<proteinExistence type="inferred from homology"/>
<sequence>MNKLIAWIEKGKPFFEKISRNIYLRAIRDGFIAAIPIILFSSIFILITYVPNVFGFTWSKTMEGILMKPYNYTMGIVGLIVAGTTAKSLTDSYNRKLDKTNQINFISTMMAAMSGFLFLAADPIKEGGFLSAFMGTKGLLTAFISAFITVIVYNFFIKRNITIKMPKEVPPNISQVFKDIFPLSAVIIIIYALDLLSRTFIHTNVANAVLKIFEPLFTAADGWIGVTLIFGAFAFFWFVGIHGPSIVEPAIAAITYANLETNLNLIQAGEHADKIITPGTQMFVATMGGTGATLVVPFMFMWLTKSKRNKAIGRASVVPTFFGVNEPILFGAPLVLNPVFFIPFIFAPIVNVWIFKFFVDVLKMNSFSIFLPWTTPGPLGIVMGTGFAFWSFVLAIVLIVVDVMIYYPFLKVYDEQILEEERGNKEVNNELKEKVSANFDTKKADAILATAGANETTTTESAPSDEEVSAKNSSNSINEQTNVLVLCAGGGTSGLLANALNKAAEEYQVPVKAAAGGYGAHMDIMKDYQLIILAPQVASNYEDIKQDTDRLGIKLAKTQGVEYINLTRDGKAALDFVQQQFEK</sequence>
<feature type="chain" id="PRO_0000186594" description="PTS system lactose-specific EIICB component">
    <location>
        <begin position="1"/>
        <end position="583"/>
    </location>
</feature>
<feature type="transmembrane region" description="Helical" evidence="3">
    <location>
        <begin position="30"/>
        <end position="50"/>
    </location>
</feature>
<feature type="transmembrane region" description="Helical" evidence="3">
    <location>
        <begin position="64"/>
        <end position="84"/>
    </location>
</feature>
<feature type="transmembrane region" description="Helical" evidence="3">
    <location>
        <begin position="103"/>
        <end position="123"/>
    </location>
</feature>
<feature type="transmembrane region" description="Helical" evidence="3">
    <location>
        <begin position="137"/>
        <end position="157"/>
    </location>
</feature>
<feature type="transmembrane region" description="Helical" evidence="3">
    <location>
        <begin position="176"/>
        <end position="196"/>
    </location>
</feature>
<feature type="transmembrane region" description="Helical" evidence="3">
    <location>
        <begin position="222"/>
        <end position="242"/>
    </location>
</feature>
<feature type="transmembrane region" description="Helical" evidence="3">
    <location>
        <begin position="283"/>
        <end position="303"/>
    </location>
</feature>
<feature type="transmembrane region" description="Helical" evidence="3">
    <location>
        <begin position="339"/>
        <end position="359"/>
    </location>
</feature>
<feature type="transmembrane region" description="Helical" evidence="3">
    <location>
        <begin position="381"/>
        <end position="401"/>
    </location>
</feature>
<feature type="domain" description="PTS EIIC type-3" evidence="3">
    <location>
        <begin position="8"/>
        <end position="409"/>
    </location>
</feature>
<feature type="domain" description="PTS EIIB type-3" evidence="2">
    <location>
        <begin position="480"/>
        <end position="583"/>
    </location>
</feature>
<feature type="region of interest" description="Disordered" evidence="4">
    <location>
        <begin position="453"/>
        <end position="475"/>
    </location>
</feature>
<feature type="compositionally biased region" description="Low complexity" evidence="4">
    <location>
        <begin position="453"/>
        <end position="462"/>
    </location>
</feature>
<feature type="active site" description="Phosphocysteine intermediate; for EIIB activity" evidence="1">
    <location>
        <position position="487"/>
    </location>
</feature>
<feature type="modified residue" description="Phosphocysteine; by EIIA" evidence="1 2">
    <location>
        <position position="487"/>
    </location>
</feature>
<dbReference type="EC" id="2.7.1.207" evidence="1"/>
<dbReference type="EMBL" id="AP006716">
    <property type="protein sequence ID" value="BAE04156.1"/>
    <property type="molecule type" value="Genomic_DNA"/>
</dbReference>
<dbReference type="RefSeq" id="WP_011275159.1">
    <property type="nucleotide sequence ID" value="NC_007168.1"/>
</dbReference>
<dbReference type="SMR" id="Q4L869"/>
<dbReference type="KEGG" id="sha:SH0847"/>
<dbReference type="eggNOG" id="COG1440">
    <property type="taxonomic scope" value="Bacteria"/>
</dbReference>
<dbReference type="eggNOG" id="COG1455">
    <property type="taxonomic scope" value="Bacteria"/>
</dbReference>
<dbReference type="HOGENOM" id="CLU_029688_0_0_9"/>
<dbReference type="OrthoDB" id="1641940at2"/>
<dbReference type="Proteomes" id="UP000000543">
    <property type="component" value="Chromosome"/>
</dbReference>
<dbReference type="GO" id="GO:0005886">
    <property type="term" value="C:plasma membrane"/>
    <property type="evidence" value="ECO:0007669"/>
    <property type="project" value="UniProtKB-SubCell"/>
</dbReference>
<dbReference type="GO" id="GO:0016301">
    <property type="term" value="F:kinase activity"/>
    <property type="evidence" value="ECO:0007669"/>
    <property type="project" value="UniProtKB-KW"/>
</dbReference>
<dbReference type="GO" id="GO:0022869">
    <property type="term" value="F:protein-N(PI)-phosphohistidine-lactose phosphotransferase system transporter activity"/>
    <property type="evidence" value="ECO:0007669"/>
    <property type="project" value="InterPro"/>
</dbReference>
<dbReference type="GO" id="GO:1901264">
    <property type="term" value="P:carbohydrate derivative transport"/>
    <property type="evidence" value="ECO:0007669"/>
    <property type="project" value="TreeGrafter"/>
</dbReference>
<dbReference type="GO" id="GO:0009401">
    <property type="term" value="P:phosphoenolpyruvate-dependent sugar phosphotransferase system"/>
    <property type="evidence" value="ECO:0007669"/>
    <property type="project" value="UniProtKB-KW"/>
</dbReference>
<dbReference type="CDD" id="cd05565">
    <property type="entry name" value="PTS_IIB_lactose"/>
    <property type="match status" value="1"/>
</dbReference>
<dbReference type="Gene3D" id="3.40.50.2300">
    <property type="match status" value="1"/>
</dbReference>
<dbReference type="InterPro" id="IPR004801">
    <property type="entry name" value="LacE"/>
</dbReference>
<dbReference type="InterPro" id="IPR036095">
    <property type="entry name" value="PTS_EIIB-like_sf"/>
</dbReference>
<dbReference type="InterPro" id="IPR003501">
    <property type="entry name" value="PTS_EIIB_2/3"/>
</dbReference>
<dbReference type="InterPro" id="IPR013012">
    <property type="entry name" value="PTS_EIIB_3"/>
</dbReference>
<dbReference type="InterPro" id="IPR003352">
    <property type="entry name" value="PTS_EIIC"/>
</dbReference>
<dbReference type="InterPro" id="IPR004501">
    <property type="entry name" value="PTS_EIIC_3"/>
</dbReference>
<dbReference type="InterPro" id="IPR041713">
    <property type="entry name" value="PTS_IIB"/>
</dbReference>
<dbReference type="InterPro" id="IPR051088">
    <property type="entry name" value="PTS_Sugar-EIIC/EIIB"/>
</dbReference>
<dbReference type="NCBIfam" id="TIGR00394">
    <property type="entry name" value="lac_pts_IIC"/>
    <property type="match status" value="1"/>
</dbReference>
<dbReference type="NCBIfam" id="TIGR00410">
    <property type="entry name" value="lacE"/>
    <property type="match status" value="1"/>
</dbReference>
<dbReference type="NCBIfam" id="TIGR00853">
    <property type="entry name" value="pts-lac"/>
    <property type="match status" value="1"/>
</dbReference>
<dbReference type="PANTHER" id="PTHR33989">
    <property type="match status" value="1"/>
</dbReference>
<dbReference type="PANTHER" id="PTHR33989:SF8">
    <property type="entry name" value="PERMEASE IIC COMPONENT"/>
    <property type="match status" value="1"/>
</dbReference>
<dbReference type="Pfam" id="PF02378">
    <property type="entry name" value="PTS_EIIC"/>
    <property type="match status" value="1"/>
</dbReference>
<dbReference type="Pfam" id="PF02302">
    <property type="entry name" value="PTS_IIB"/>
    <property type="match status" value="1"/>
</dbReference>
<dbReference type="SUPFAM" id="SSF52794">
    <property type="entry name" value="PTS system IIB component-like"/>
    <property type="match status" value="1"/>
</dbReference>
<dbReference type="PROSITE" id="PS51100">
    <property type="entry name" value="PTS_EIIB_TYPE_3"/>
    <property type="match status" value="1"/>
</dbReference>
<dbReference type="PROSITE" id="PS51105">
    <property type="entry name" value="PTS_EIIC_TYPE_3"/>
    <property type="match status" value="1"/>
</dbReference>
<organism>
    <name type="scientific">Staphylococcus haemolyticus (strain JCSC1435)</name>
    <dbReference type="NCBI Taxonomy" id="279808"/>
    <lineage>
        <taxon>Bacteria</taxon>
        <taxon>Bacillati</taxon>
        <taxon>Bacillota</taxon>
        <taxon>Bacilli</taxon>
        <taxon>Bacillales</taxon>
        <taxon>Staphylococcaceae</taxon>
        <taxon>Staphylococcus</taxon>
    </lineage>
</organism>
<gene>
    <name evidence="1" type="primary">lacE</name>
    <name type="ordered locus">SH0847</name>
</gene>
<accession>Q4L869</accession>